<proteinExistence type="evidence at transcript level"/>
<protein>
    <recommendedName>
        <fullName>Metallothionein-like protein type 2 A</fullName>
    </recommendedName>
    <alternativeName>
        <fullName>LeMT(A)</fullName>
    </alternativeName>
</protein>
<accession>Q40157</accession>
<sequence length="72" mass="7113">MSCCGGSCGCGSGCKCGSGCGGCGMYPDMEKSTTFTIIEGVAPINNYGNVEEKAAGEGCKCGSNCTCDPCNC</sequence>
<evidence type="ECO:0000305" key="1"/>
<keyword id="KW-0479">Metal-binding</keyword>
<keyword id="KW-0480">Metal-thiolate cluster</keyword>
<keyword id="KW-1185">Reference proteome</keyword>
<name>MT2A_SOLLC</name>
<gene>
    <name type="primary">MTA</name>
</gene>
<dbReference type="EMBL" id="L77963">
    <property type="protein sequence ID" value="AAB04674.1"/>
    <property type="molecule type" value="mRNA"/>
</dbReference>
<dbReference type="PIR" id="T07073">
    <property type="entry name" value="T07073"/>
</dbReference>
<dbReference type="RefSeq" id="NP_001234720.1">
    <property type="nucleotide sequence ID" value="NM_001247791.2"/>
</dbReference>
<dbReference type="STRING" id="4081.Q40157"/>
<dbReference type="PaxDb" id="4081-Solyc04g058150.2.1"/>
<dbReference type="EnsemblPlants" id="Solyc04g058150.3.1">
    <property type="protein sequence ID" value="Solyc04g058150.3.1"/>
    <property type="gene ID" value="Solyc04g058150.3"/>
</dbReference>
<dbReference type="GeneID" id="543972"/>
<dbReference type="Gramene" id="Solyc04g058150.3.1">
    <property type="protein sequence ID" value="Solyc04g058150.3.1"/>
    <property type="gene ID" value="Solyc04g058150.3"/>
</dbReference>
<dbReference type="KEGG" id="sly:543972"/>
<dbReference type="eggNOG" id="KOG4738">
    <property type="taxonomic scope" value="Eukaryota"/>
</dbReference>
<dbReference type="HOGENOM" id="CLU_161105_1_0_1"/>
<dbReference type="InParanoid" id="Q40157"/>
<dbReference type="OMA" id="YHEVSEM"/>
<dbReference type="OrthoDB" id="1111048at2759"/>
<dbReference type="PhylomeDB" id="Q40157"/>
<dbReference type="Proteomes" id="UP000004994">
    <property type="component" value="Chromosome 4"/>
</dbReference>
<dbReference type="ExpressionAtlas" id="Q40157">
    <property type="expression patterns" value="baseline and differential"/>
</dbReference>
<dbReference type="GO" id="GO:0046872">
    <property type="term" value="F:metal ion binding"/>
    <property type="evidence" value="ECO:0007669"/>
    <property type="project" value="UniProtKB-KW"/>
</dbReference>
<dbReference type="InterPro" id="IPR000347">
    <property type="entry name" value="Metalthion_15p"/>
</dbReference>
<dbReference type="PANTHER" id="PTHR33543">
    <property type="entry name" value="METALLOTHIONEIN-LIKE PROTEIN 2A"/>
    <property type="match status" value="1"/>
</dbReference>
<dbReference type="PANTHER" id="PTHR33543:SF37">
    <property type="entry name" value="METALLOTHIONEIN-LIKE PROTEIN 4B"/>
    <property type="match status" value="1"/>
</dbReference>
<dbReference type="Pfam" id="PF01439">
    <property type="entry name" value="Metallothio_2"/>
    <property type="match status" value="1"/>
</dbReference>
<feature type="chain" id="PRO_0000197398" description="Metallothionein-like protein type 2 A">
    <location>
        <begin position="1"/>
        <end position="72"/>
    </location>
</feature>
<reference key="1">
    <citation type="journal article" date="1997" name="Plant Mol. Biol.">
        <title>The isolation and characterization of type II metallothionein-like genes from tomato (Lycopersicon esculentum L.).</title>
        <authorList>
            <person name="Whitelaw C.A."/>
            <person name="Le Huquet J.A."/>
            <person name="Thurman D.A."/>
            <person name="Tomsett A.B."/>
        </authorList>
    </citation>
    <scope>NUCLEOTIDE SEQUENCE [MRNA]</scope>
    <source>
        <strain>cv. Ailsa Craig</strain>
    </source>
</reference>
<organism>
    <name type="scientific">Solanum lycopersicum</name>
    <name type="common">Tomato</name>
    <name type="synonym">Lycopersicon esculentum</name>
    <dbReference type="NCBI Taxonomy" id="4081"/>
    <lineage>
        <taxon>Eukaryota</taxon>
        <taxon>Viridiplantae</taxon>
        <taxon>Streptophyta</taxon>
        <taxon>Embryophyta</taxon>
        <taxon>Tracheophyta</taxon>
        <taxon>Spermatophyta</taxon>
        <taxon>Magnoliopsida</taxon>
        <taxon>eudicotyledons</taxon>
        <taxon>Gunneridae</taxon>
        <taxon>Pentapetalae</taxon>
        <taxon>asterids</taxon>
        <taxon>lamiids</taxon>
        <taxon>Solanales</taxon>
        <taxon>Solanaceae</taxon>
        <taxon>Solanoideae</taxon>
        <taxon>Solaneae</taxon>
        <taxon>Solanum</taxon>
        <taxon>Solanum subgen. Lycopersicon</taxon>
    </lineage>
</organism>
<comment type="function">
    <text>Metallothioneins have a high content of cysteine residues that bind various heavy metals.</text>
</comment>
<comment type="tissue specificity">
    <text>Leaves and roots.</text>
</comment>
<comment type="similarity">
    <text evidence="1">Belongs to the metallothionein superfamily. Type 15 family.</text>
</comment>